<name>IDI2_STAA3</name>
<gene>
    <name evidence="1" type="primary">fni</name>
    <name type="ordered locus">SAUSA300_2292</name>
</gene>
<keyword id="KW-0963">Cytoplasm</keyword>
<keyword id="KW-0285">Flavoprotein</keyword>
<keyword id="KW-0288">FMN</keyword>
<keyword id="KW-0413">Isomerase</keyword>
<keyword id="KW-0414">Isoprene biosynthesis</keyword>
<keyword id="KW-0460">Magnesium</keyword>
<keyword id="KW-0479">Metal-binding</keyword>
<keyword id="KW-0521">NADP</keyword>
<accession>Q2FEF1</accession>
<comment type="function">
    <text evidence="1">Involved in the biosynthesis of isoprenoids. Catalyzes the 1,3-allylic rearrangement of the homoallylic substrate isopentenyl (IPP) to its allylic isomer, dimethylallyl diphosphate (DMAPP).</text>
</comment>
<comment type="catalytic activity">
    <reaction evidence="1">
        <text>isopentenyl diphosphate = dimethylallyl diphosphate</text>
        <dbReference type="Rhea" id="RHEA:23284"/>
        <dbReference type="ChEBI" id="CHEBI:57623"/>
        <dbReference type="ChEBI" id="CHEBI:128769"/>
        <dbReference type="EC" id="5.3.3.2"/>
    </reaction>
</comment>
<comment type="cofactor">
    <cofactor evidence="1">
        <name>FMN</name>
        <dbReference type="ChEBI" id="CHEBI:58210"/>
    </cofactor>
</comment>
<comment type="cofactor">
    <cofactor evidence="1">
        <name>NADPH</name>
        <dbReference type="ChEBI" id="CHEBI:57783"/>
    </cofactor>
</comment>
<comment type="cofactor">
    <cofactor evidence="1">
        <name>Mg(2+)</name>
        <dbReference type="ChEBI" id="CHEBI:18420"/>
    </cofactor>
</comment>
<comment type="subunit">
    <text evidence="1">Homooctamer. Dimer of tetramers.</text>
</comment>
<comment type="subcellular location">
    <subcellularLocation>
        <location evidence="1">Cytoplasm</location>
    </subcellularLocation>
</comment>
<comment type="similarity">
    <text evidence="1">Belongs to the IPP isomerase type 2 family.</text>
</comment>
<sequence length="349" mass="38770">MSDFQREQRKNEHVEIAMAQSDAMHSDFDKMRFVHHSIPSINVNDIDLTSQTPDLTMAYPVYINAMTGGSEWTKNINEKLAVVARETGLAMAVGSTHAALRNPRMAETFTIARKMNPEGMIFSNVGADVPVEKALEAVELLEAQALQIHVNSPQELVMPEGNREFVTWLDNIASIVSRVSVPVIIKEVGFGMSKELMHDLQQIGVKYVDVSGKGGTNFVDIENERRANKDMDYLSSWGQSTVESLLETTAYQSEISVFASGGLRTPLDAIKSLALGAKATGMSRPFLNQVENNGIAHTVAYVESFIEHMKSIMTMLDAKNIDDLTQKQIVFSPEILSWIEQRNLNIHRG</sequence>
<proteinExistence type="inferred from homology"/>
<feature type="chain" id="PRO_1000048458" description="Isopentenyl-diphosphate delta-isomerase">
    <location>
        <begin position="1"/>
        <end position="349"/>
    </location>
</feature>
<feature type="binding site" evidence="1">
    <location>
        <begin position="9"/>
        <end position="10"/>
    </location>
    <ligand>
        <name>substrate</name>
    </ligand>
</feature>
<feature type="binding site" evidence="1">
    <location>
        <begin position="65"/>
        <end position="67"/>
    </location>
    <ligand>
        <name>FMN</name>
        <dbReference type="ChEBI" id="CHEBI:58210"/>
    </ligand>
</feature>
<feature type="binding site" evidence="1">
    <location>
        <begin position="95"/>
        <end position="97"/>
    </location>
    <ligand>
        <name>substrate</name>
    </ligand>
</feature>
<feature type="binding site" evidence="1">
    <location>
        <position position="95"/>
    </location>
    <ligand>
        <name>FMN</name>
        <dbReference type="ChEBI" id="CHEBI:58210"/>
    </ligand>
</feature>
<feature type="binding site" evidence="1">
    <location>
        <position position="124"/>
    </location>
    <ligand>
        <name>FMN</name>
        <dbReference type="ChEBI" id="CHEBI:58210"/>
    </ligand>
</feature>
<feature type="binding site" evidence="1">
    <location>
        <position position="154"/>
    </location>
    <ligand>
        <name>substrate</name>
    </ligand>
</feature>
<feature type="binding site" evidence="1">
    <location>
        <position position="155"/>
    </location>
    <ligand>
        <name>Mg(2+)</name>
        <dbReference type="ChEBI" id="CHEBI:18420"/>
    </ligand>
</feature>
<feature type="binding site" evidence="1">
    <location>
        <position position="186"/>
    </location>
    <ligand>
        <name>FMN</name>
        <dbReference type="ChEBI" id="CHEBI:58210"/>
    </ligand>
</feature>
<feature type="binding site" evidence="1">
    <location>
        <position position="211"/>
    </location>
    <ligand>
        <name>FMN</name>
        <dbReference type="ChEBI" id="CHEBI:58210"/>
    </ligand>
</feature>
<feature type="binding site" evidence="1">
    <location>
        <position position="216"/>
    </location>
    <ligand>
        <name>FMN</name>
        <dbReference type="ChEBI" id="CHEBI:58210"/>
    </ligand>
</feature>
<feature type="binding site" evidence="1">
    <location>
        <begin position="262"/>
        <end position="264"/>
    </location>
    <ligand>
        <name>FMN</name>
        <dbReference type="ChEBI" id="CHEBI:58210"/>
    </ligand>
</feature>
<feature type="binding site" evidence="1">
    <location>
        <begin position="283"/>
        <end position="284"/>
    </location>
    <ligand>
        <name>FMN</name>
        <dbReference type="ChEBI" id="CHEBI:58210"/>
    </ligand>
</feature>
<evidence type="ECO:0000255" key="1">
    <source>
        <dbReference type="HAMAP-Rule" id="MF_00354"/>
    </source>
</evidence>
<organism>
    <name type="scientific">Staphylococcus aureus (strain USA300)</name>
    <dbReference type="NCBI Taxonomy" id="367830"/>
    <lineage>
        <taxon>Bacteria</taxon>
        <taxon>Bacillati</taxon>
        <taxon>Bacillota</taxon>
        <taxon>Bacilli</taxon>
        <taxon>Bacillales</taxon>
        <taxon>Staphylococcaceae</taxon>
        <taxon>Staphylococcus</taxon>
    </lineage>
</organism>
<dbReference type="EC" id="5.3.3.2" evidence="1"/>
<dbReference type="EMBL" id="CP000255">
    <property type="protein sequence ID" value="ABD20739.1"/>
    <property type="molecule type" value="Genomic_DNA"/>
</dbReference>
<dbReference type="RefSeq" id="WP_001279381.1">
    <property type="nucleotide sequence ID" value="NZ_CP027476.1"/>
</dbReference>
<dbReference type="SMR" id="Q2FEF1"/>
<dbReference type="KEGG" id="saa:SAUSA300_2292"/>
<dbReference type="HOGENOM" id="CLU_065515_0_0_9"/>
<dbReference type="OMA" id="WDWGIPT"/>
<dbReference type="Proteomes" id="UP000001939">
    <property type="component" value="Chromosome"/>
</dbReference>
<dbReference type="GO" id="GO:0005737">
    <property type="term" value="C:cytoplasm"/>
    <property type="evidence" value="ECO:0007669"/>
    <property type="project" value="UniProtKB-SubCell"/>
</dbReference>
<dbReference type="GO" id="GO:0010181">
    <property type="term" value="F:FMN binding"/>
    <property type="evidence" value="ECO:0007669"/>
    <property type="project" value="UniProtKB-UniRule"/>
</dbReference>
<dbReference type="GO" id="GO:0004452">
    <property type="term" value="F:isopentenyl-diphosphate delta-isomerase activity"/>
    <property type="evidence" value="ECO:0007669"/>
    <property type="project" value="UniProtKB-UniRule"/>
</dbReference>
<dbReference type="GO" id="GO:0000287">
    <property type="term" value="F:magnesium ion binding"/>
    <property type="evidence" value="ECO:0007669"/>
    <property type="project" value="UniProtKB-UniRule"/>
</dbReference>
<dbReference type="GO" id="GO:0070402">
    <property type="term" value="F:NADPH binding"/>
    <property type="evidence" value="ECO:0007669"/>
    <property type="project" value="UniProtKB-UniRule"/>
</dbReference>
<dbReference type="GO" id="GO:0016491">
    <property type="term" value="F:oxidoreductase activity"/>
    <property type="evidence" value="ECO:0007669"/>
    <property type="project" value="InterPro"/>
</dbReference>
<dbReference type="GO" id="GO:0008299">
    <property type="term" value="P:isoprenoid biosynthetic process"/>
    <property type="evidence" value="ECO:0007669"/>
    <property type="project" value="UniProtKB-UniRule"/>
</dbReference>
<dbReference type="CDD" id="cd02811">
    <property type="entry name" value="IDI-2_FMN"/>
    <property type="match status" value="1"/>
</dbReference>
<dbReference type="Gene3D" id="3.20.20.70">
    <property type="entry name" value="Aldolase class I"/>
    <property type="match status" value="1"/>
</dbReference>
<dbReference type="HAMAP" id="MF_00354">
    <property type="entry name" value="Idi_2"/>
    <property type="match status" value="1"/>
</dbReference>
<dbReference type="InterPro" id="IPR013785">
    <property type="entry name" value="Aldolase_TIM"/>
</dbReference>
<dbReference type="InterPro" id="IPR000262">
    <property type="entry name" value="FMN-dep_DH"/>
</dbReference>
<dbReference type="InterPro" id="IPR011179">
    <property type="entry name" value="IPdP_isomerase"/>
</dbReference>
<dbReference type="NCBIfam" id="TIGR02151">
    <property type="entry name" value="IPP_isom_2"/>
    <property type="match status" value="1"/>
</dbReference>
<dbReference type="PANTHER" id="PTHR43665">
    <property type="entry name" value="ISOPENTENYL-DIPHOSPHATE DELTA-ISOMERASE"/>
    <property type="match status" value="1"/>
</dbReference>
<dbReference type="PANTHER" id="PTHR43665:SF1">
    <property type="entry name" value="ISOPENTENYL-DIPHOSPHATE DELTA-ISOMERASE"/>
    <property type="match status" value="1"/>
</dbReference>
<dbReference type="Pfam" id="PF01070">
    <property type="entry name" value="FMN_dh"/>
    <property type="match status" value="1"/>
</dbReference>
<dbReference type="PIRSF" id="PIRSF003314">
    <property type="entry name" value="IPP_isomerase"/>
    <property type="match status" value="1"/>
</dbReference>
<dbReference type="SUPFAM" id="SSF51395">
    <property type="entry name" value="FMN-linked oxidoreductases"/>
    <property type="match status" value="1"/>
</dbReference>
<protein>
    <recommendedName>
        <fullName evidence="1">Isopentenyl-diphosphate delta-isomerase</fullName>
        <shortName evidence="1">IPP isomerase</shortName>
        <ecNumber evidence="1">5.3.3.2</ecNumber>
    </recommendedName>
    <alternativeName>
        <fullName evidence="1">Isopentenyl diphosphate:dimethylallyl diphosphate isomerase</fullName>
    </alternativeName>
    <alternativeName>
        <fullName evidence="1">Isopentenyl pyrophosphate isomerase</fullName>
    </alternativeName>
    <alternativeName>
        <fullName evidence="1">Type 2 isopentenyl diphosphate isomerase</fullName>
        <shortName evidence="1">IDI-2</shortName>
    </alternativeName>
</protein>
<reference key="1">
    <citation type="journal article" date="2006" name="Lancet">
        <title>Complete genome sequence of USA300, an epidemic clone of community-acquired meticillin-resistant Staphylococcus aureus.</title>
        <authorList>
            <person name="Diep B.A."/>
            <person name="Gill S.R."/>
            <person name="Chang R.F."/>
            <person name="Phan T.H."/>
            <person name="Chen J.H."/>
            <person name="Davidson M.G."/>
            <person name="Lin F."/>
            <person name="Lin J."/>
            <person name="Carleton H.A."/>
            <person name="Mongodin E.F."/>
            <person name="Sensabaugh G.F."/>
            <person name="Perdreau-Remington F."/>
        </authorList>
    </citation>
    <scope>NUCLEOTIDE SEQUENCE [LARGE SCALE GENOMIC DNA]</scope>
    <source>
        <strain>USA300</strain>
    </source>
</reference>